<keyword id="KW-0694">RNA-binding</keyword>
<keyword id="KW-0804">Transcription</keyword>
<keyword id="KW-0889">Transcription antitermination</keyword>
<keyword id="KW-0805">Transcription regulation</keyword>
<dbReference type="EMBL" id="CP000514">
    <property type="protein sequence ID" value="ABM17942.1"/>
    <property type="molecule type" value="Genomic_DNA"/>
</dbReference>
<dbReference type="RefSeq" id="WP_011784364.1">
    <property type="nucleotide sequence ID" value="NC_008740.1"/>
</dbReference>
<dbReference type="SMR" id="A1TYX3"/>
<dbReference type="STRING" id="351348.Maqu_0846"/>
<dbReference type="KEGG" id="maq:Maqu_0846"/>
<dbReference type="eggNOG" id="COG0781">
    <property type="taxonomic scope" value="Bacteria"/>
</dbReference>
<dbReference type="HOGENOM" id="CLU_087843_4_1_6"/>
<dbReference type="OrthoDB" id="9789556at2"/>
<dbReference type="Proteomes" id="UP000000998">
    <property type="component" value="Chromosome"/>
</dbReference>
<dbReference type="GO" id="GO:0005829">
    <property type="term" value="C:cytosol"/>
    <property type="evidence" value="ECO:0007669"/>
    <property type="project" value="TreeGrafter"/>
</dbReference>
<dbReference type="GO" id="GO:0003723">
    <property type="term" value="F:RNA binding"/>
    <property type="evidence" value="ECO:0007669"/>
    <property type="project" value="UniProtKB-UniRule"/>
</dbReference>
<dbReference type="GO" id="GO:0006353">
    <property type="term" value="P:DNA-templated transcription termination"/>
    <property type="evidence" value="ECO:0007669"/>
    <property type="project" value="UniProtKB-UniRule"/>
</dbReference>
<dbReference type="GO" id="GO:0031564">
    <property type="term" value="P:transcription antitermination"/>
    <property type="evidence" value="ECO:0007669"/>
    <property type="project" value="UniProtKB-KW"/>
</dbReference>
<dbReference type="Gene3D" id="1.10.940.10">
    <property type="entry name" value="NusB-like"/>
    <property type="match status" value="1"/>
</dbReference>
<dbReference type="HAMAP" id="MF_00073">
    <property type="entry name" value="NusB"/>
    <property type="match status" value="1"/>
</dbReference>
<dbReference type="InterPro" id="IPR035926">
    <property type="entry name" value="NusB-like_sf"/>
</dbReference>
<dbReference type="InterPro" id="IPR011605">
    <property type="entry name" value="NusB_fam"/>
</dbReference>
<dbReference type="InterPro" id="IPR006027">
    <property type="entry name" value="NusB_RsmB_TIM44"/>
</dbReference>
<dbReference type="NCBIfam" id="TIGR01951">
    <property type="entry name" value="nusB"/>
    <property type="match status" value="1"/>
</dbReference>
<dbReference type="PANTHER" id="PTHR11078:SF3">
    <property type="entry name" value="ANTITERMINATION NUSB DOMAIN-CONTAINING PROTEIN"/>
    <property type="match status" value="1"/>
</dbReference>
<dbReference type="PANTHER" id="PTHR11078">
    <property type="entry name" value="N UTILIZATION SUBSTANCE PROTEIN B-RELATED"/>
    <property type="match status" value="1"/>
</dbReference>
<dbReference type="Pfam" id="PF01029">
    <property type="entry name" value="NusB"/>
    <property type="match status" value="1"/>
</dbReference>
<dbReference type="SUPFAM" id="SSF48013">
    <property type="entry name" value="NusB-like"/>
    <property type="match status" value="1"/>
</dbReference>
<name>NUSB_MARN8</name>
<reference key="1">
    <citation type="journal article" date="2011" name="Appl. Environ. Microbiol.">
        <title>Genomic potential of Marinobacter aquaeolei, a biogeochemical 'opportunitroph'.</title>
        <authorList>
            <person name="Singer E."/>
            <person name="Webb E.A."/>
            <person name="Nelson W.C."/>
            <person name="Heidelberg J.F."/>
            <person name="Ivanova N."/>
            <person name="Pati A."/>
            <person name="Edwards K.J."/>
        </authorList>
    </citation>
    <scope>NUCLEOTIDE SEQUENCE [LARGE SCALE GENOMIC DNA]</scope>
    <source>
        <strain>ATCC 700491 / DSM 11845 / VT8</strain>
    </source>
</reference>
<organism>
    <name type="scientific">Marinobacter nauticus (strain ATCC 700491 / DSM 11845 / VT8)</name>
    <name type="common">Marinobacter aquaeolei</name>
    <dbReference type="NCBI Taxonomy" id="351348"/>
    <lineage>
        <taxon>Bacteria</taxon>
        <taxon>Pseudomonadati</taxon>
        <taxon>Pseudomonadota</taxon>
        <taxon>Gammaproteobacteria</taxon>
        <taxon>Pseudomonadales</taxon>
        <taxon>Marinobacteraceae</taxon>
        <taxon>Marinobacter</taxon>
    </lineage>
</organism>
<comment type="function">
    <text evidence="1">Involved in transcription antitermination. Required for transcription of ribosomal RNA (rRNA) genes. Binds specifically to the boxA antiterminator sequence of the ribosomal RNA (rrn) operons.</text>
</comment>
<comment type="similarity">
    <text evidence="1">Belongs to the NusB family.</text>
</comment>
<proteinExistence type="inferred from homology"/>
<protein>
    <recommendedName>
        <fullName evidence="1">Transcription antitermination protein NusB</fullName>
    </recommendedName>
    <alternativeName>
        <fullName evidence="1">Antitermination factor NusB</fullName>
    </alternativeName>
</protein>
<sequence length="158" mass="18103">MSEAGDTSPQPGKTGQPKAGDRRRARALAMQGLYQRHFSKTPISDIEAEFMVDNDMSKVDIMYFRDLLRGVHREQAELDKLLEPFLDRPLKEVDPVELAIVRLGAYELKHRIDVPYKVVINEGIEMAKRFGGTEGHKFVNSILDKLSRRLRLAETRPR</sequence>
<feature type="chain" id="PRO_1000023746" description="Transcription antitermination protein NusB">
    <location>
        <begin position="1"/>
        <end position="158"/>
    </location>
</feature>
<feature type="region of interest" description="Disordered" evidence="2">
    <location>
        <begin position="1"/>
        <end position="24"/>
    </location>
</feature>
<feature type="compositionally biased region" description="Polar residues" evidence="2">
    <location>
        <begin position="1"/>
        <end position="13"/>
    </location>
</feature>
<gene>
    <name evidence="1" type="primary">nusB</name>
    <name type="ordered locus">Maqu_0846</name>
</gene>
<evidence type="ECO:0000255" key="1">
    <source>
        <dbReference type="HAMAP-Rule" id="MF_00073"/>
    </source>
</evidence>
<evidence type="ECO:0000256" key="2">
    <source>
        <dbReference type="SAM" id="MobiDB-lite"/>
    </source>
</evidence>
<accession>A1TYX3</accession>